<dbReference type="EMBL" id="AJ251748">
    <property type="protein sequence ID" value="CAB63100.1"/>
    <property type="molecule type" value="mRNA"/>
</dbReference>
<dbReference type="EMBL" id="AE014297">
    <property type="protein sequence ID" value="AAF55138.1"/>
    <property type="molecule type" value="Genomic_DNA"/>
</dbReference>
<dbReference type="EMBL" id="AE014297">
    <property type="protein sequence ID" value="AAO41566.1"/>
    <property type="molecule type" value="Genomic_DNA"/>
</dbReference>
<dbReference type="EMBL" id="AY094712">
    <property type="protein sequence ID" value="AAM11065.1"/>
    <property type="molecule type" value="mRNA"/>
</dbReference>
<dbReference type="RefSeq" id="NP_524954.2">
    <property type="nucleotide sequence ID" value="NM_080215.4"/>
</dbReference>
<dbReference type="RefSeq" id="NP_788678.1">
    <property type="nucleotide sequence ID" value="NM_176501.3"/>
</dbReference>
<dbReference type="SMR" id="Q9VFC2"/>
<dbReference type="FunCoup" id="Q9VFC2">
    <property type="interactions" value="48"/>
</dbReference>
<dbReference type="IntAct" id="Q9VFC2">
    <property type="interactions" value="1"/>
</dbReference>
<dbReference type="STRING" id="7227.FBpp0082595"/>
<dbReference type="MEROPS" id="I04.085"/>
<dbReference type="GlyCosmos" id="Q9VFC2">
    <property type="glycosylation" value="1 site, No reported glycans"/>
</dbReference>
<dbReference type="GlyGen" id="Q9VFC2">
    <property type="glycosylation" value="1 site"/>
</dbReference>
<dbReference type="PaxDb" id="7227-FBpp0082595"/>
<dbReference type="DNASU" id="49804"/>
<dbReference type="EnsemblMetazoa" id="FBtr0083141">
    <property type="protein sequence ID" value="FBpp0082595"/>
    <property type="gene ID" value="FBgn0028984"/>
</dbReference>
<dbReference type="EnsemblMetazoa" id="FBtr0083142">
    <property type="protein sequence ID" value="FBpp0082596"/>
    <property type="gene ID" value="FBgn0028984"/>
</dbReference>
<dbReference type="GeneID" id="49804"/>
<dbReference type="KEGG" id="dme:Dmel_CG18525"/>
<dbReference type="UCSC" id="CG18525-RA">
    <property type="organism name" value="d. melanogaster"/>
</dbReference>
<dbReference type="AGR" id="FB:FBgn0028984"/>
<dbReference type="CTD" id="49804"/>
<dbReference type="FlyBase" id="FBgn0028984">
    <property type="gene designation" value="Spn88Ea"/>
</dbReference>
<dbReference type="VEuPathDB" id="VectorBase:FBgn0028984"/>
<dbReference type="eggNOG" id="KOG2392">
    <property type="taxonomic scope" value="Eukaryota"/>
</dbReference>
<dbReference type="GeneTree" id="ENSGT00940000173118"/>
<dbReference type="HOGENOM" id="CLU_023330_0_0_1"/>
<dbReference type="InParanoid" id="Q9VFC2"/>
<dbReference type="OMA" id="MTKGHIR"/>
<dbReference type="OrthoDB" id="671595at2759"/>
<dbReference type="PhylomeDB" id="Q9VFC2"/>
<dbReference type="Reactome" id="R-DME-114608">
    <property type="pathway name" value="Platelet degranulation"/>
</dbReference>
<dbReference type="Reactome" id="R-DME-140837">
    <property type="pathway name" value="Intrinsic Pathway of Fibrin Clot Formation"/>
</dbReference>
<dbReference type="Reactome" id="R-DME-140875">
    <property type="pathway name" value="Common Pathway of Fibrin Clot Formation"/>
</dbReference>
<dbReference type="Reactome" id="R-DME-194002">
    <property type="pathway name" value="Glucocorticoid biosynthesis"/>
</dbReference>
<dbReference type="Reactome" id="R-DME-2022377">
    <property type="pathway name" value="Metabolism of Angiotensinogen to Angiotensins"/>
</dbReference>
<dbReference type="Reactome" id="R-DME-204005">
    <property type="pathway name" value="COPII-mediated vesicle transport"/>
</dbReference>
<dbReference type="Reactome" id="R-DME-375276">
    <property type="pathway name" value="Peptide ligand-binding receptors"/>
</dbReference>
<dbReference type="Reactome" id="R-DME-381426">
    <property type="pathway name" value="Regulation of Insulin-like Growth Factor (IGF) transport and uptake by Insulin-like Growth Factor Binding Proteins (IGFBPs)"/>
</dbReference>
<dbReference type="Reactome" id="R-DME-416476">
    <property type="pathway name" value="G alpha (q) signalling events"/>
</dbReference>
<dbReference type="Reactome" id="R-DME-418594">
    <property type="pathway name" value="G alpha (i) signalling events"/>
</dbReference>
<dbReference type="Reactome" id="R-DME-5694530">
    <property type="pathway name" value="Cargo concentration in the ER"/>
</dbReference>
<dbReference type="Reactome" id="R-DME-6798695">
    <property type="pathway name" value="Neutrophil degranulation"/>
</dbReference>
<dbReference type="Reactome" id="R-DME-8939242">
    <property type="pathway name" value="RUNX1 regulates transcription of genes involved in differentiation of keratinocytes"/>
</dbReference>
<dbReference type="Reactome" id="R-DME-8957275">
    <property type="pathway name" value="Post-translational protein phosphorylation"/>
</dbReference>
<dbReference type="Reactome" id="R-DME-9757110">
    <property type="pathway name" value="Prednisone ADME"/>
</dbReference>
<dbReference type="BioGRID-ORCS" id="49804">
    <property type="hits" value="0 hits in 3 CRISPR screens"/>
</dbReference>
<dbReference type="GenomeRNAi" id="49804"/>
<dbReference type="PRO" id="PR:Q9VFC2"/>
<dbReference type="Proteomes" id="UP000000803">
    <property type="component" value="Chromosome 3R"/>
</dbReference>
<dbReference type="Bgee" id="FBgn0028984">
    <property type="expression patterns" value="Expressed in oviduct (Drosophila) and 117 other cell types or tissues"/>
</dbReference>
<dbReference type="GO" id="GO:0005576">
    <property type="term" value="C:extracellular region"/>
    <property type="evidence" value="ECO:0007005"/>
    <property type="project" value="FlyBase"/>
</dbReference>
<dbReference type="GO" id="GO:0005615">
    <property type="term" value="C:extracellular space"/>
    <property type="evidence" value="ECO:0000318"/>
    <property type="project" value="GO_Central"/>
</dbReference>
<dbReference type="GO" id="GO:0004867">
    <property type="term" value="F:serine-type endopeptidase inhibitor activity"/>
    <property type="evidence" value="ECO:0007669"/>
    <property type="project" value="UniProtKB-KW"/>
</dbReference>
<dbReference type="GO" id="GO:0048526">
    <property type="term" value="P:imaginal disc-derived wing expansion"/>
    <property type="evidence" value="ECO:0000315"/>
    <property type="project" value="FlyBase"/>
</dbReference>
<dbReference type="GO" id="GO:0002376">
    <property type="term" value="P:immune system process"/>
    <property type="evidence" value="ECO:0007669"/>
    <property type="project" value="UniProtKB-KW"/>
</dbReference>
<dbReference type="GO" id="GO:0042438">
    <property type="term" value="P:melanin biosynthetic process"/>
    <property type="evidence" value="ECO:0007669"/>
    <property type="project" value="UniProtKB-KW"/>
</dbReference>
<dbReference type="GO" id="GO:0045824">
    <property type="term" value="P:negative regulation of innate immune response"/>
    <property type="evidence" value="ECO:0000315"/>
    <property type="project" value="FlyBase"/>
</dbReference>
<dbReference type="GO" id="GO:0045861">
    <property type="term" value="P:negative regulation of proteolysis"/>
    <property type="evidence" value="ECO:0000315"/>
    <property type="project" value="FlyBase"/>
</dbReference>
<dbReference type="GO" id="GO:0160035">
    <property type="term" value="P:negative regulation of Toll receptor ligand protein activation cascade"/>
    <property type="evidence" value="ECO:0000315"/>
    <property type="project" value="FlyBase"/>
</dbReference>
<dbReference type="GO" id="GO:0050776">
    <property type="term" value="P:regulation of immune response"/>
    <property type="evidence" value="ECO:0000318"/>
    <property type="project" value="GO_Central"/>
</dbReference>
<dbReference type="CDD" id="cd19594">
    <property type="entry name" value="serpin_crustaceans_chelicerates_insects"/>
    <property type="match status" value="1"/>
</dbReference>
<dbReference type="Gene3D" id="2.30.39.10">
    <property type="entry name" value="Alpha-1-antitrypsin, domain 1"/>
    <property type="match status" value="1"/>
</dbReference>
<dbReference type="Gene3D" id="3.30.497.10">
    <property type="entry name" value="Antithrombin, subunit I, domain 2"/>
    <property type="match status" value="1"/>
</dbReference>
<dbReference type="InterPro" id="IPR023795">
    <property type="entry name" value="Serpin_CS"/>
</dbReference>
<dbReference type="InterPro" id="IPR023796">
    <property type="entry name" value="Serpin_dom"/>
</dbReference>
<dbReference type="InterPro" id="IPR000215">
    <property type="entry name" value="Serpin_fam"/>
</dbReference>
<dbReference type="InterPro" id="IPR036186">
    <property type="entry name" value="Serpin_sf"/>
</dbReference>
<dbReference type="InterPro" id="IPR042178">
    <property type="entry name" value="Serpin_sf_1"/>
</dbReference>
<dbReference type="InterPro" id="IPR042185">
    <property type="entry name" value="Serpin_sf_2"/>
</dbReference>
<dbReference type="PANTHER" id="PTHR11461:SF278">
    <property type="entry name" value="SERINE PROTEASE INHIBITOR 88EA"/>
    <property type="match status" value="1"/>
</dbReference>
<dbReference type="PANTHER" id="PTHR11461">
    <property type="entry name" value="SERINE PROTEASE INHIBITOR, SERPIN"/>
    <property type="match status" value="1"/>
</dbReference>
<dbReference type="Pfam" id="PF00079">
    <property type="entry name" value="Serpin"/>
    <property type="match status" value="1"/>
</dbReference>
<dbReference type="SMART" id="SM00093">
    <property type="entry name" value="SERPIN"/>
    <property type="match status" value="1"/>
</dbReference>
<dbReference type="SUPFAM" id="SSF56574">
    <property type="entry name" value="Serpins"/>
    <property type="match status" value="1"/>
</dbReference>
<dbReference type="PROSITE" id="PS00284">
    <property type="entry name" value="SERPIN"/>
    <property type="match status" value="1"/>
</dbReference>
<protein>
    <recommendedName>
        <fullName evidence="6">Serine protease inhibitor 88Ea</fullName>
        <shortName evidence="10">Serpin 88Ea</shortName>
    </recommendedName>
</protein>
<keyword id="KW-0325">Glycoprotein</keyword>
<keyword id="KW-0391">Immunity</keyword>
<keyword id="KW-0470">Melanin biosynthesis</keyword>
<keyword id="KW-0646">Protease inhibitor</keyword>
<keyword id="KW-1185">Reference proteome</keyword>
<keyword id="KW-0964">Secreted</keyword>
<keyword id="KW-0722">Serine protease inhibitor</keyword>
<keyword id="KW-0732">Signal</keyword>
<proteinExistence type="evidence at transcript level"/>
<gene>
    <name evidence="10" type="primary">Spn88Ea</name>
    <name evidence="6" type="synonym">Spn5</name>
    <name evidence="10" type="ORF">CG18525</name>
</gene>
<accession>Q9VFC2</accession>
<accession>Q9U1I4</accession>
<organism evidence="11">
    <name type="scientific">Drosophila melanogaster</name>
    <name type="common">Fruit fly</name>
    <dbReference type="NCBI Taxonomy" id="7227"/>
    <lineage>
        <taxon>Eukaryota</taxon>
        <taxon>Metazoa</taxon>
        <taxon>Ecdysozoa</taxon>
        <taxon>Arthropoda</taxon>
        <taxon>Hexapoda</taxon>
        <taxon>Insecta</taxon>
        <taxon>Pterygota</taxon>
        <taxon>Neoptera</taxon>
        <taxon>Endopterygota</taxon>
        <taxon>Diptera</taxon>
        <taxon>Brachycera</taxon>
        <taxon>Muscomorpha</taxon>
        <taxon>Ephydroidea</taxon>
        <taxon>Drosophilidae</taxon>
        <taxon>Drosophila</taxon>
        <taxon>Sophophora</taxon>
    </lineage>
</organism>
<name>SP88E_DROME</name>
<sequence length="427" mass="48476">MHILSISLMAVLPAIALAGLCGVEPDAGLLDQRLNLYKGQQNFAVSMLNVIRQSTPNENVFFSPYSTYHALLLAYFGSSGDTEKELAKVLHLDWADSKEVVRSAYILEKMNRKERQSKMPLEFSSADRIFFANDLHVTECARNRLAEEVQQIDFKSQTEESRKQINDWIAKQTHDQIRNMLSADEITPRTRLVLANAAYLKGQWLSQFKTEKTVPMPFYTSPSNYSLVSMMQQKGTFLLNVDEQLRAHVLQLPYRTVFESQEKEDSSPDENSDISMVLILPPFNSNSLEDVLSRLNADSLDDSLKQAMPREIEVSLPKFEFEQRLELNPILAKMGVSKMFDESVATFDDLTSETISIGDSKHVAKIKVDEEGSTAAAATVLFTYRSARPVEPAKFECNHPFLFVIYDRTSRSILFTGIYRDPKTIKQ</sequence>
<feature type="signal peptide" evidence="2">
    <location>
        <begin position="1"/>
        <end position="18"/>
    </location>
</feature>
<feature type="chain" id="PRO_5007718228" description="Serine protease inhibitor 88Ea" evidence="5">
    <location>
        <begin position="19"/>
        <end position="427"/>
    </location>
</feature>
<feature type="site" description="Reactive bond" evidence="1">
    <location>
        <begin position="386"/>
        <end position="387"/>
    </location>
</feature>
<feature type="glycosylation site" description="N-linked (GlcNAc...) asparagine" evidence="3">
    <location>
        <position position="224"/>
    </location>
</feature>
<feature type="sequence conflict" description="In Ref. 1; CAB63100." evidence="7" ref="1">
    <original>P</original>
    <variation>L</variation>
    <location>
        <position position="329"/>
    </location>
</feature>
<feature type="sequence conflict" description="In Ref. 1; CAB63100." evidence="7" ref="1">
    <original>A</original>
    <variation>P</variation>
    <location>
        <position position="364"/>
    </location>
</feature>
<evidence type="ECO:0000250" key="1">
    <source>
        <dbReference type="UniProtKB" id="Q9VLU4"/>
    </source>
</evidence>
<evidence type="ECO:0000255" key="2"/>
<evidence type="ECO:0000255" key="3">
    <source>
        <dbReference type="PROSITE-ProRule" id="PRU00498"/>
    </source>
</evidence>
<evidence type="ECO:0000269" key="4">
    <source>
    </source>
</evidence>
<evidence type="ECO:0000269" key="5">
    <source>
    </source>
</evidence>
<evidence type="ECO:0000303" key="6">
    <source>
    </source>
</evidence>
<evidence type="ECO:0000305" key="7"/>
<evidence type="ECO:0000312" key="8">
    <source>
        <dbReference type="EMBL" id="AAM11065.1"/>
    </source>
</evidence>
<evidence type="ECO:0000312" key="9">
    <source>
        <dbReference type="EMBL" id="CAB63100.1"/>
    </source>
</evidence>
<evidence type="ECO:0000312" key="10">
    <source>
        <dbReference type="FlyBase" id="FBgn0028984"/>
    </source>
</evidence>
<evidence type="ECO:0000312" key="11">
    <source>
        <dbReference type="Proteomes" id="UP000000803"/>
    </source>
</evidence>
<comment type="function">
    <text evidence="4 5">Serine protease inhibitor with activity toward trypsin (PubMed:18956323). Negatively regulates the Toll signaling pathway and suppresses the expression of the antifungal peptide drosomycin (PubMed:19581577). Its negative regulation of the Toll signaling pathway also results in the inhibition of the melanization immune response via the phenoloxidase (PPO1) cascade (PubMed:19581577). Essential for unfolding and expansion of the wings after emergence from the pupal case (PubMed:18956323). May regulate the Toll pathway by blocking the proteolysis of the Toll ligand spz (PubMed:19581577).</text>
</comment>
<comment type="subcellular location">
    <subcellularLocation>
        <location evidence="5">Secreted</location>
    </subcellularLocation>
</comment>
<comment type="tissue specificity">
    <text evidence="4">Expressed in nurse cells and oocytes. Expressed in wings.</text>
</comment>
<comment type="developmental stage">
    <text evidence="4">Expressed both maternally and zygotically. Expressed throughout development, with very weak expression between stages 10-16 of embryogenesis and weak expression in adults. In stage 5-6 blastoderm and gastrulating embryos, expression is uniform. In stage 16-17 embryos, expressed in the ventral and dorsal epidermis, posterior spiracles, foregut, hindgut, sensory nervous system primordium, pharynx and respiratory system. In larvae, expressed in the posterior spiracles and tracheal system. In pupae, expressed in the wing imaginal disks.</text>
</comment>
<comment type="disruption phenotype">
    <text evidence="4 5">Larval lethal (PubMed:19581577). Larvae develop melanotic spots and display an increase in the activity of the activated form of prophenoloxidase 1 (PPO1), phenoloxidase (PO) (PubMed:19581577). Larvae display enhanced activation of the Toll signaling pathway, with increased Tl, spz and Drs expression (PubMed:19581577). RNAi-mediated knockdown of maternal and zygotic expression results in adults that have a reduced lifespan (PubMed:19581577). Wing development appears to be unaffected, however after emergence from the pupal case adult wings fail to unfold and instead remain folded and hypotrophic until death (PubMed:18956323). Other aspects of development in embryos, larvae, pupae and adults appears to be unaffected.</text>
</comment>
<comment type="similarity">
    <text evidence="7">Belongs to the serpin family.</text>
</comment>
<reference evidence="9" key="1">
    <citation type="journal article" date="2000" name="FEBS Lett.">
        <title>A novel Drosophila serpin that inhibits serine proteases.</title>
        <authorList>
            <person name="Han J.H."/>
            <person name="Zhang H."/>
            <person name="Min G.S."/>
            <person name="Hashimoto C."/>
        </authorList>
    </citation>
    <scope>NUCLEOTIDE SEQUENCE [MRNA]</scope>
</reference>
<reference evidence="11" key="2">
    <citation type="journal article" date="2000" name="Science">
        <title>The genome sequence of Drosophila melanogaster.</title>
        <authorList>
            <person name="Adams M.D."/>
            <person name="Celniker S.E."/>
            <person name="Holt R.A."/>
            <person name="Evans C.A."/>
            <person name="Gocayne J.D."/>
            <person name="Amanatides P.G."/>
            <person name="Scherer S.E."/>
            <person name="Li P.W."/>
            <person name="Hoskins R.A."/>
            <person name="Galle R.F."/>
            <person name="George R.A."/>
            <person name="Lewis S.E."/>
            <person name="Richards S."/>
            <person name="Ashburner M."/>
            <person name="Henderson S.N."/>
            <person name="Sutton G.G."/>
            <person name="Wortman J.R."/>
            <person name="Yandell M.D."/>
            <person name="Zhang Q."/>
            <person name="Chen L.X."/>
            <person name="Brandon R.C."/>
            <person name="Rogers Y.-H.C."/>
            <person name="Blazej R.G."/>
            <person name="Champe M."/>
            <person name="Pfeiffer B.D."/>
            <person name="Wan K.H."/>
            <person name="Doyle C."/>
            <person name="Baxter E.G."/>
            <person name="Helt G."/>
            <person name="Nelson C.R."/>
            <person name="Miklos G.L.G."/>
            <person name="Abril J.F."/>
            <person name="Agbayani A."/>
            <person name="An H.-J."/>
            <person name="Andrews-Pfannkoch C."/>
            <person name="Baldwin D."/>
            <person name="Ballew R.M."/>
            <person name="Basu A."/>
            <person name="Baxendale J."/>
            <person name="Bayraktaroglu L."/>
            <person name="Beasley E.M."/>
            <person name="Beeson K.Y."/>
            <person name="Benos P.V."/>
            <person name="Berman B.P."/>
            <person name="Bhandari D."/>
            <person name="Bolshakov S."/>
            <person name="Borkova D."/>
            <person name="Botchan M.R."/>
            <person name="Bouck J."/>
            <person name="Brokstein P."/>
            <person name="Brottier P."/>
            <person name="Burtis K.C."/>
            <person name="Busam D.A."/>
            <person name="Butler H."/>
            <person name="Cadieu E."/>
            <person name="Center A."/>
            <person name="Chandra I."/>
            <person name="Cherry J.M."/>
            <person name="Cawley S."/>
            <person name="Dahlke C."/>
            <person name="Davenport L.B."/>
            <person name="Davies P."/>
            <person name="de Pablos B."/>
            <person name="Delcher A."/>
            <person name="Deng Z."/>
            <person name="Mays A.D."/>
            <person name="Dew I."/>
            <person name="Dietz S.M."/>
            <person name="Dodson K."/>
            <person name="Doup L.E."/>
            <person name="Downes M."/>
            <person name="Dugan-Rocha S."/>
            <person name="Dunkov B.C."/>
            <person name="Dunn P."/>
            <person name="Durbin K.J."/>
            <person name="Evangelista C.C."/>
            <person name="Ferraz C."/>
            <person name="Ferriera S."/>
            <person name="Fleischmann W."/>
            <person name="Fosler C."/>
            <person name="Gabrielian A.E."/>
            <person name="Garg N.S."/>
            <person name="Gelbart W.M."/>
            <person name="Glasser K."/>
            <person name="Glodek A."/>
            <person name="Gong F."/>
            <person name="Gorrell J.H."/>
            <person name="Gu Z."/>
            <person name="Guan P."/>
            <person name="Harris M."/>
            <person name="Harris N.L."/>
            <person name="Harvey D.A."/>
            <person name="Heiman T.J."/>
            <person name="Hernandez J.R."/>
            <person name="Houck J."/>
            <person name="Hostin D."/>
            <person name="Houston K.A."/>
            <person name="Howland T.J."/>
            <person name="Wei M.-H."/>
            <person name="Ibegwam C."/>
            <person name="Jalali M."/>
            <person name="Kalush F."/>
            <person name="Karpen G.H."/>
            <person name="Ke Z."/>
            <person name="Kennison J.A."/>
            <person name="Ketchum K.A."/>
            <person name="Kimmel B.E."/>
            <person name="Kodira C.D."/>
            <person name="Kraft C.L."/>
            <person name="Kravitz S."/>
            <person name="Kulp D."/>
            <person name="Lai Z."/>
            <person name="Lasko P."/>
            <person name="Lei Y."/>
            <person name="Levitsky A.A."/>
            <person name="Li J.H."/>
            <person name="Li Z."/>
            <person name="Liang Y."/>
            <person name="Lin X."/>
            <person name="Liu X."/>
            <person name="Mattei B."/>
            <person name="McIntosh T.C."/>
            <person name="McLeod M.P."/>
            <person name="McPherson D."/>
            <person name="Merkulov G."/>
            <person name="Milshina N.V."/>
            <person name="Mobarry C."/>
            <person name="Morris J."/>
            <person name="Moshrefi A."/>
            <person name="Mount S.M."/>
            <person name="Moy M."/>
            <person name="Murphy B."/>
            <person name="Murphy L."/>
            <person name="Muzny D.M."/>
            <person name="Nelson D.L."/>
            <person name="Nelson D.R."/>
            <person name="Nelson K.A."/>
            <person name="Nixon K."/>
            <person name="Nusskern D.R."/>
            <person name="Pacleb J.M."/>
            <person name="Palazzolo M."/>
            <person name="Pittman G.S."/>
            <person name="Pan S."/>
            <person name="Pollard J."/>
            <person name="Puri V."/>
            <person name="Reese M.G."/>
            <person name="Reinert K."/>
            <person name="Remington K."/>
            <person name="Saunders R.D.C."/>
            <person name="Scheeler F."/>
            <person name="Shen H."/>
            <person name="Shue B.C."/>
            <person name="Siden-Kiamos I."/>
            <person name="Simpson M."/>
            <person name="Skupski M.P."/>
            <person name="Smith T.J."/>
            <person name="Spier E."/>
            <person name="Spradling A.C."/>
            <person name="Stapleton M."/>
            <person name="Strong R."/>
            <person name="Sun E."/>
            <person name="Svirskas R."/>
            <person name="Tector C."/>
            <person name="Turner R."/>
            <person name="Venter E."/>
            <person name="Wang A.H."/>
            <person name="Wang X."/>
            <person name="Wang Z.-Y."/>
            <person name="Wassarman D.A."/>
            <person name="Weinstock G.M."/>
            <person name="Weissenbach J."/>
            <person name="Williams S.M."/>
            <person name="Woodage T."/>
            <person name="Worley K.C."/>
            <person name="Wu D."/>
            <person name="Yang S."/>
            <person name="Yao Q.A."/>
            <person name="Ye J."/>
            <person name="Yeh R.-F."/>
            <person name="Zaveri J.S."/>
            <person name="Zhan M."/>
            <person name="Zhang G."/>
            <person name="Zhao Q."/>
            <person name="Zheng L."/>
            <person name="Zheng X.H."/>
            <person name="Zhong F.N."/>
            <person name="Zhong W."/>
            <person name="Zhou X."/>
            <person name="Zhu S.C."/>
            <person name="Zhu X."/>
            <person name="Smith H.O."/>
            <person name="Gibbs R.A."/>
            <person name="Myers E.W."/>
            <person name="Rubin G.M."/>
            <person name="Venter J.C."/>
        </authorList>
    </citation>
    <scope>NUCLEOTIDE SEQUENCE [LARGE SCALE GENOMIC DNA]</scope>
    <source>
        <strain evidence="11">Berkeley</strain>
    </source>
</reference>
<reference evidence="11" key="3">
    <citation type="journal article" date="2002" name="Genome Biol.">
        <title>Annotation of the Drosophila melanogaster euchromatic genome: a systematic review.</title>
        <authorList>
            <person name="Misra S."/>
            <person name="Crosby M.A."/>
            <person name="Mungall C.J."/>
            <person name="Matthews B.B."/>
            <person name="Campbell K.S."/>
            <person name="Hradecky P."/>
            <person name="Huang Y."/>
            <person name="Kaminker J.S."/>
            <person name="Millburn G.H."/>
            <person name="Prochnik S.E."/>
            <person name="Smith C.D."/>
            <person name="Tupy J.L."/>
            <person name="Whitfield E.J."/>
            <person name="Bayraktaroglu L."/>
            <person name="Berman B.P."/>
            <person name="Bettencourt B.R."/>
            <person name="Celniker S.E."/>
            <person name="de Grey A.D.N.J."/>
            <person name="Drysdale R.A."/>
            <person name="Harris N.L."/>
            <person name="Richter J."/>
            <person name="Russo S."/>
            <person name="Schroeder A.J."/>
            <person name="Shu S.Q."/>
            <person name="Stapleton M."/>
            <person name="Yamada C."/>
            <person name="Ashburner M."/>
            <person name="Gelbart W.M."/>
            <person name="Rubin G.M."/>
            <person name="Lewis S.E."/>
        </authorList>
    </citation>
    <scope>GENOME REANNOTATION</scope>
    <source>
        <strain evidence="11">Berkeley</strain>
    </source>
</reference>
<reference evidence="8" key="4">
    <citation type="journal article" date="2002" name="Genome Biol.">
        <title>A Drosophila full-length cDNA resource.</title>
        <authorList>
            <person name="Stapleton M."/>
            <person name="Carlson J.W."/>
            <person name="Brokstein P."/>
            <person name="Yu C."/>
            <person name="Champe M."/>
            <person name="George R.A."/>
            <person name="Guarin H."/>
            <person name="Kronmiller B."/>
            <person name="Pacleb J.M."/>
            <person name="Park S."/>
            <person name="Wan K.H."/>
            <person name="Rubin G.M."/>
            <person name="Celniker S.E."/>
        </authorList>
    </citation>
    <scope>NUCLEOTIDE SEQUENCE [LARGE SCALE MRNA]</scope>
    <source>
        <strain evidence="8">Berkeley</strain>
        <tissue evidence="8">Head</tissue>
    </source>
</reference>
<reference evidence="7" key="5">
    <citation type="journal article" date="2008" name="Int. J. Dev. Biol.">
        <title>The serpin Spn5 is essential for wing expansion in Drosophila melanogaster.</title>
        <authorList>
            <person name="Charron Y."/>
            <person name="Madani R."/>
            <person name="Combepine C."/>
            <person name="Gajdosik V."/>
            <person name="Hwu Y."/>
            <person name="Margaritondo G."/>
            <person name="Vassalli J.D."/>
        </authorList>
    </citation>
    <scope>FUNCTION</scope>
    <scope>TISSUE SPECIFICITY</scope>
    <scope>DEVELOPMENTAL STAGE</scope>
    <scope>DISRUPTION PHENOTYPE</scope>
</reference>
<reference evidence="7" key="6">
    <citation type="journal article" date="2009" name="Proc. Natl. Acad. Sci. U.S.A.">
        <title>Genetic screen identifies serpin5 as a regulator of the toll pathway and CHMP2B toxicity associated with frontotemporal dementia.</title>
        <authorList>
            <person name="Ahmad S.T."/>
            <person name="Sweeney S.T."/>
            <person name="Lee J.A."/>
            <person name="Sweeney N.T."/>
            <person name="Gao F.B."/>
        </authorList>
    </citation>
    <scope>FUNCTION</scope>
    <scope>SUBCELLULAR LOCATION</scope>
    <scope>DISRUPTION PHENOTYPE</scope>
</reference>